<organism>
    <name type="scientific">Homo sapiens</name>
    <name type="common">Human</name>
    <dbReference type="NCBI Taxonomy" id="9606"/>
    <lineage>
        <taxon>Eukaryota</taxon>
        <taxon>Metazoa</taxon>
        <taxon>Chordata</taxon>
        <taxon>Craniata</taxon>
        <taxon>Vertebrata</taxon>
        <taxon>Euteleostomi</taxon>
        <taxon>Mammalia</taxon>
        <taxon>Eutheria</taxon>
        <taxon>Euarchontoglires</taxon>
        <taxon>Primates</taxon>
        <taxon>Haplorrhini</taxon>
        <taxon>Catarrhini</taxon>
        <taxon>Hominidae</taxon>
        <taxon>Homo</taxon>
    </lineage>
</organism>
<keyword id="KW-0963">Cytoplasm</keyword>
<keyword id="KW-0903">Direct protein sequencing</keyword>
<keyword id="KW-0539">Nucleus</keyword>
<keyword id="KW-0597">Phosphoprotein</keyword>
<keyword id="KW-0653">Protein transport</keyword>
<keyword id="KW-1267">Proteomics identification</keyword>
<keyword id="KW-1185">Reference proteome</keyword>
<keyword id="KW-0813">Transport</keyword>
<evidence type="ECO:0000250" key="1">
    <source>
        <dbReference type="UniProtKB" id="Q9ESJ0"/>
    </source>
</evidence>
<evidence type="ECO:0000269" key="2">
    <source>
    </source>
</evidence>
<evidence type="ECO:0000269" key="3">
    <source>
    </source>
</evidence>
<evidence type="ECO:0000269" key="4">
    <source>
    </source>
</evidence>
<evidence type="ECO:0000303" key="5">
    <source>
    </source>
</evidence>
<evidence type="ECO:0000303" key="6">
    <source>
    </source>
</evidence>
<evidence type="ECO:0000303" key="7">
    <source>
    </source>
</evidence>
<evidence type="ECO:0000305" key="8"/>
<evidence type="ECO:0000312" key="9">
    <source>
        <dbReference type="HGNC" id="HGNC:17796"/>
    </source>
</evidence>
<evidence type="ECO:0007744" key="10">
    <source>
    </source>
</evidence>
<evidence type="ECO:0007744" key="11">
    <source>
    </source>
</evidence>
<evidence type="ECO:0007744" key="12">
    <source>
    </source>
</evidence>
<evidence type="ECO:0007744" key="13">
    <source>
    </source>
</evidence>
<evidence type="ECO:0007744" key="14">
    <source>
    </source>
</evidence>
<evidence type="ECO:0007744" key="15">
    <source>
    </source>
</evidence>
<evidence type="ECO:0007744" key="16">
    <source>
    </source>
</evidence>
<reference key="1">
    <citation type="journal article" date="2000" name="DNA Res.">
        <title>Prediction of the coding sequences of unidentified human genes. XIX. The complete sequences of 100 new cDNA clones from brain which code for large proteins in vitro.</title>
        <authorList>
            <person name="Nagase T."/>
            <person name="Kikuno R."/>
            <person name="Hattori A."/>
            <person name="Kondo Y."/>
            <person name="Okumura K."/>
            <person name="Ohara O."/>
        </authorList>
    </citation>
    <scope>NUCLEOTIDE SEQUENCE [LARGE SCALE MRNA]</scope>
    <source>
        <tissue>Brain</tissue>
    </source>
</reference>
<reference key="2">
    <citation type="journal article" date="2004" name="Nature">
        <title>The DNA sequence and analysis of human chromosome 13.</title>
        <authorList>
            <person name="Dunham A."/>
            <person name="Matthews L.H."/>
            <person name="Burton J."/>
            <person name="Ashurst J.L."/>
            <person name="Howe K.L."/>
            <person name="Ashcroft K.J."/>
            <person name="Beare D.M."/>
            <person name="Burford D.C."/>
            <person name="Hunt S.E."/>
            <person name="Griffiths-Jones S."/>
            <person name="Jones M.C."/>
            <person name="Keenan S.J."/>
            <person name="Oliver K."/>
            <person name="Scott C.E."/>
            <person name="Ainscough R."/>
            <person name="Almeida J.P."/>
            <person name="Ambrose K.D."/>
            <person name="Andrews D.T."/>
            <person name="Ashwell R.I.S."/>
            <person name="Babbage A.K."/>
            <person name="Bagguley C.L."/>
            <person name="Bailey J."/>
            <person name="Bannerjee R."/>
            <person name="Barlow K.F."/>
            <person name="Bates K."/>
            <person name="Beasley H."/>
            <person name="Bird C.P."/>
            <person name="Bray-Allen S."/>
            <person name="Brown A.J."/>
            <person name="Brown J.Y."/>
            <person name="Burrill W."/>
            <person name="Carder C."/>
            <person name="Carter N.P."/>
            <person name="Chapman J.C."/>
            <person name="Clamp M.E."/>
            <person name="Clark S.Y."/>
            <person name="Clarke G."/>
            <person name="Clee C.M."/>
            <person name="Clegg S.C."/>
            <person name="Cobley V."/>
            <person name="Collins J.E."/>
            <person name="Corby N."/>
            <person name="Coville G.J."/>
            <person name="Deloukas P."/>
            <person name="Dhami P."/>
            <person name="Dunham I."/>
            <person name="Dunn M."/>
            <person name="Earthrowl M.E."/>
            <person name="Ellington A.G."/>
            <person name="Faulkner L."/>
            <person name="Frankish A.G."/>
            <person name="Frankland J."/>
            <person name="French L."/>
            <person name="Garner P."/>
            <person name="Garnett J."/>
            <person name="Gilbert J.G.R."/>
            <person name="Gilson C.J."/>
            <person name="Ghori J."/>
            <person name="Grafham D.V."/>
            <person name="Gribble S.M."/>
            <person name="Griffiths C."/>
            <person name="Hall R.E."/>
            <person name="Hammond S."/>
            <person name="Harley J.L."/>
            <person name="Hart E.A."/>
            <person name="Heath P.D."/>
            <person name="Howden P.J."/>
            <person name="Huckle E.J."/>
            <person name="Hunt P.J."/>
            <person name="Hunt A.R."/>
            <person name="Johnson C."/>
            <person name="Johnson D."/>
            <person name="Kay M."/>
            <person name="Kimberley A.M."/>
            <person name="King A."/>
            <person name="Laird G.K."/>
            <person name="Langford C.J."/>
            <person name="Lawlor S."/>
            <person name="Leongamornlert D.A."/>
            <person name="Lloyd D.M."/>
            <person name="Lloyd C."/>
            <person name="Loveland J.E."/>
            <person name="Lovell J."/>
            <person name="Martin S."/>
            <person name="Mashreghi-Mohammadi M."/>
            <person name="McLaren S.J."/>
            <person name="McMurray A."/>
            <person name="Milne S."/>
            <person name="Moore M.J.F."/>
            <person name="Nickerson T."/>
            <person name="Palmer S.A."/>
            <person name="Pearce A.V."/>
            <person name="Peck A.I."/>
            <person name="Pelan S."/>
            <person name="Phillimore B."/>
            <person name="Porter K.M."/>
            <person name="Rice C.M."/>
            <person name="Searle S."/>
            <person name="Sehra H.K."/>
            <person name="Shownkeen R."/>
            <person name="Skuce C.D."/>
            <person name="Smith M."/>
            <person name="Steward C.A."/>
            <person name="Sycamore N."/>
            <person name="Tester J."/>
            <person name="Thomas D.W."/>
            <person name="Tracey A."/>
            <person name="Tromans A."/>
            <person name="Tubby B."/>
            <person name="Wall M."/>
            <person name="Wallis J.M."/>
            <person name="West A.P."/>
            <person name="Whitehead S.L."/>
            <person name="Willey D.L."/>
            <person name="Wilming L."/>
            <person name="Wray P.W."/>
            <person name="Wright M.W."/>
            <person name="Young L."/>
            <person name="Coulson A."/>
            <person name="Durbin R.M."/>
            <person name="Hubbard T."/>
            <person name="Sulston J.E."/>
            <person name="Beck S."/>
            <person name="Bentley D.R."/>
            <person name="Rogers J."/>
            <person name="Ross M.T."/>
        </authorList>
    </citation>
    <scope>NUCLEOTIDE SEQUENCE [LARGE SCALE GENOMIC DNA]</scope>
</reference>
<reference key="3">
    <citation type="journal article" date="2004" name="Nat. Genet.">
        <title>Complete sequencing and characterization of 21,243 full-length human cDNAs.</title>
        <authorList>
            <person name="Ota T."/>
            <person name="Suzuki Y."/>
            <person name="Nishikawa T."/>
            <person name="Otsuki T."/>
            <person name="Sugiyama T."/>
            <person name="Irie R."/>
            <person name="Wakamatsu A."/>
            <person name="Hayashi K."/>
            <person name="Sato H."/>
            <person name="Nagai K."/>
            <person name="Kimura K."/>
            <person name="Makita H."/>
            <person name="Sekine M."/>
            <person name="Obayashi M."/>
            <person name="Nishi T."/>
            <person name="Shibahara T."/>
            <person name="Tanaka T."/>
            <person name="Ishii S."/>
            <person name="Yamamoto J."/>
            <person name="Saito K."/>
            <person name="Kawai Y."/>
            <person name="Isono Y."/>
            <person name="Nakamura Y."/>
            <person name="Nagahari K."/>
            <person name="Murakami K."/>
            <person name="Yasuda T."/>
            <person name="Iwayanagi T."/>
            <person name="Wagatsuma M."/>
            <person name="Shiratori A."/>
            <person name="Sudo H."/>
            <person name="Hosoiri T."/>
            <person name="Kaku Y."/>
            <person name="Kodaira H."/>
            <person name="Kondo H."/>
            <person name="Sugawara M."/>
            <person name="Takahashi M."/>
            <person name="Kanda K."/>
            <person name="Yokoi T."/>
            <person name="Furuya T."/>
            <person name="Kikkawa E."/>
            <person name="Omura Y."/>
            <person name="Abe K."/>
            <person name="Kamihara K."/>
            <person name="Katsuta N."/>
            <person name="Sato K."/>
            <person name="Tanikawa M."/>
            <person name="Yamazaki M."/>
            <person name="Ninomiya K."/>
            <person name="Ishibashi T."/>
            <person name="Yamashita H."/>
            <person name="Murakawa K."/>
            <person name="Fujimori K."/>
            <person name="Tanai H."/>
            <person name="Kimata M."/>
            <person name="Watanabe M."/>
            <person name="Hiraoka S."/>
            <person name="Chiba Y."/>
            <person name="Ishida S."/>
            <person name="Ono Y."/>
            <person name="Takiguchi S."/>
            <person name="Watanabe S."/>
            <person name="Yosida M."/>
            <person name="Hotuta T."/>
            <person name="Kusano J."/>
            <person name="Kanehori K."/>
            <person name="Takahashi-Fujii A."/>
            <person name="Hara H."/>
            <person name="Tanase T.-O."/>
            <person name="Nomura Y."/>
            <person name="Togiya S."/>
            <person name="Komai F."/>
            <person name="Hara R."/>
            <person name="Takeuchi K."/>
            <person name="Arita M."/>
            <person name="Imose N."/>
            <person name="Musashino K."/>
            <person name="Yuuki H."/>
            <person name="Oshima A."/>
            <person name="Sasaki N."/>
            <person name="Aotsuka S."/>
            <person name="Yoshikawa Y."/>
            <person name="Matsunawa H."/>
            <person name="Ichihara T."/>
            <person name="Shiohata N."/>
            <person name="Sano S."/>
            <person name="Moriya S."/>
            <person name="Momiyama H."/>
            <person name="Satoh N."/>
            <person name="Takami S."/>
            <person name="Terashima Y."/>
            <person name="Suzuki O."/>
            <person name="Nakagawa S."/>
            <person name="Senoh A."/>
            <person name="Mizoguchi H."/>
            <person name="Goto Y."/>
            <person name="Shimizu F."/>
            <person name="Wakebe H."/>
            <person name="Hishigaki H."/>
            <person name="Watanabe T."/>
            <person name="Sugiyama A."/>
            <person name="Takemoto M."/>
            <person name="Kawakami B."/>
            <person name="Yamazaki M."/>
            <person name="Watanabe K."/>
            <person name="Kumagai A."/>
            <person name="Itakura S."/>
            <person name="Fukuzumi Y."/>
            <person name="Fujimori Y."/>
            <person name="Komiyama M."/>
            <person name="Tashiro H."/>
            <person name="Tanigami A."/>
            <person name="Fujiwara T."/>
            <person name="Ono T."/>
            <person name="Yamada K."/>
            <person name="Fujii Y."/>
            <person name="Ozaki K."/>
            <person name="Hirao M."/>
            <person name="Ohmori Y."/>
            <person name="Kawabata A."/>
            <person name="Hikiji T."/>
            <person name="Kobatake N."/>
            <person name="Inagaki H."/>
            <person name="Ikema Y."/>
            <person name="Okamoto S."/>
            <person name="Okitani R."/>
            <person name="Kawakami T."/>
            <person name="Noguchi S."/>
            <person name="Itoh T."/>
            <person name="Shigeta K."/>
            <person name="Senba T."/>
            <person name="Matsumura K."/>
            <person name="Nakajima Y."/>
            <person name="Mizuno T."/>
            <person name="Morinaga M."/>
            <person name="Sasaki M."/>
            <person name="Togashi T."/>
            <person name="Oyama M."/>
            <person name="Hata H."/>
            <person name="Watanabe M."/>
            <person name="Komatsu T."/>
            <person name="Mizushima-Sugano J."/>
            <person name="Satoh T."/>
            <person name="Shirai Y."/>
            <person name="Takahashi Y."/>
            <person name="Nakagawa K."/>
            <person name="Okumura K."/>
            <person name="Nagase T."/>
            <person name="Nomura N."/>
            <person name="Kikuchi H."/>
            <person name="Masuho Y."/>
            <person name="Yamashita R."/>
            <person name="Nakai K."/>
            <person name="Yada T."/>
            <person name="Nakamura Y."/>
            <person name="Ohara O."/>
            <person name="Isogai T."/>
            <person name="Sugano S."/>
        </authorList>
    </citation>
    <scope>NUCLEOTIDE SEQUENCE [LARGE SCALE MRNA] OF 337-1151</scope>
</reference>
<reference key="4">
    <citation type="journal article" date="2007" name="BMC Genomics">
        <title>The full-ORF clone resource of the German cDNA consortium.</title>
        <authorList>
            <person name="Bechtel S."/>
            <person name="Rosenfelder H."/>
            <person name="Duda A."/>
            <person name="Schmidt C.P."/>
            <person name="Ernst U."/>
            <person name="Wellenreuther R."/>
            <person name="Mehrle A."/>
            <person name="Schuster C."/>
            <person name="Bahr A."/>
            <person name="Bloecker H."/>
            <person name="Heubner D."/>
            <person name="Hoerlein A."/>
            <person name="Michel G."/>
            <person name="Wedler H."/>
            <person name="Koehrer K."/>
            <person name="Ottenwaelder B."/>
            <person name="Poustka A."/>
            <person name="Wiemann S."/>
            <person name="Schupp I."/>
        </authorList>
    </citation>
    <scope>NUCLEOTIDE SEQUENCE [LARGE SCALE MRNA] OF 888-1151</scope>
    <source>
        <tissue>Skeletal muscle</tissue>
    </source>
</reference>
<reference key="5">
    <citation type="journal article" date="2000" name="EMBO J.">
        <title>Exportin 4: a mediator of a novel nuclear export pathway in higher eukaryotes.</title>
        <authorList>
            <person name="Lipowsky G."/>
            <person name="Bischoff F.R."/>
            <person name="Schwarzmaier P."/>
            <person name="Kraft R."/>
            <person name="Kostka S."/>
            <person name="Hartmann E."/>
            <person name="Kutay U."/>
            <person name="Goerlich D."/>
        </authorList>
    </citation>
    <scope>PARTIAL PROTEIN SEQUENCE</scope>
    <scope>FUNCTION IN NUCLEAR PROTEIN EXPORT</scope>
    <scope>IDENTIFICATION IN A COMPLEX WITH RAN AND EIF5A</scope>
</reference>
<reference key="6">
    <citation type="journal article" date="2006" name="Cell">
        <title>Global, in vivo, and site-specific phosphorylation dynamics in signaling networks.</title>
        <authorList>
            <person name="Olsen J.V."/>
            <person name="Blagoev B."/>
            <person name="Gnad F."/>
            <person name="Macek B."/>
            <person name="Kumar C."/>
            <person name="Mortensen P."/>
            <person name="Mann M."/>
        </authorList>
    </citation>
    <scope>PHOSPHORYLATION [LARGE SCALE ANALYSIS] AT SER-521</scope>
    <scope>IDENTIFICATION BY MASS SPECTROMETRY [LARGE SCALE ANALYSIS]</scope>
    <source>
        <tissue>Cervix carcinoma</tissue>
    </source>
</reference>
<reference key="7">
    <citation type="journal article" date="2006" name="Mol. Cell. Biol.">
        <title>The mechanism of nuclear export of Smad3 involves exportin 4 and Ran.</title>
        <authorList>
            <person name="Kurisaki A."/>
            <person name="Kurisaki K."/>
            <person name="Kowanetz M."/>
            <person name="Sugino H."/>
            <person name="Yoneda Y."/>
            <person name="Heldin C.-H."/>
            <person name="Moustakas A."/>
        </authorList>
    </citation>
    <scope>FUNCTION IN NUCLEAR PROTEIN EXPORT</scope>
    <scope>IDENTIFICATION IN A COMPLEX WITH RAN AND SMAD3</scope>
    <scope>INTERACTION WITH SMAD3</scope>
    <scope>SUBCELLULAR LOCATION</scope>
</reference>
<reference key="8">
    <citation type="journal article" date="2008" name="Mol. Cell">
        <title>Kinase-selective enrichment enables quantitative phosphoproteomics of the kinome across the cell cycle.</title>
        <authorList>
            <person name="Daub H."/>
            <person name="Olsen J.V."/>
            <person name="Bairlein M."/>
            <person name="Gnad F."/>
            <person name="Oppermann F.S."/>
            <person name="Korner R."/>
            <person name="Greff Z."/>
            <person name="Keri G."/>
            <person name="Stemmann O."/>
            <person name="Mann M."/>
        </authorList>
    </citation>
    <scope>PHOSPHORYLATION [LARGE SCALE ANALYSIS] AT SER-464 AND SER-521</scope>
    <scope>IDENTIFICATION BY MASS SPECTROMETRY [LARGE SCALE ANALYSIS]</scope>
    <source>
        <tissue>Cervix carcinoma</tissue>
    </source>
</reference>
<reference key="9">
    <citation type="journal article" date="2008" name="Proc. Natl. Acad. Sci. U.S.A.">
        <title>A quantitative atlas of mitotic phosphorylation.</title>
        <authorList>
            <person name="Dephoure N."/>
            <person name="Zhou C."/>
            <person name="Villen J."/>
            <person name="Beausoleil S.A."/>
            <person name="Bakalarski C.E."/>
            <person name="Elledge S.J."/>
            <person name="Gygi S.P."/>
        </authorList>
    </citation>
    <scope>PHOSPHORYLATION [LARGE SCALE ANALYSIS] AT SER-464</scope>
    <scope>IDENTIFICATION BY MASS SPECTROMETRY [LARGE SCALE ANALYSIS]</scope>
    <source>
        <tissue>Cervix carcinoma</tissue>
    </source>
</reference>
<reference key="10">
    <citation type="journal article" date="2009" name="Sci. Signal.">
        <title>Quantitative phosphoproteomic analysis of T cell receptor signaling reveals system-wide modulation of protein-protein interactions.</title>
        <authorList>
            <person name="Mayya V."/>
            <person name="Lundgren D.H."/>
            <person name="Hwang S.-I."/>
            <person name="Rezaul K."/>
            <person name="Wu L."/>
            <person name="Eng J.K."/>
            <person name="Rodionov V."/>
            <person name="Han D.K."/>
        </authorList>
    </citation>
    <scope>PHOSPHORYLATION [LARGE SCALE ANALYSIS] AT SER-521</scope>
    <scope>IDENTIFICATION BY MASS SPECTROMETRY [LARGE SCALE ANALYSIS]</scope>
    <source>
        <tissue>Leukemic T-cell</tissue>
    </source>
</reference>
<reference key="11">
    <citation type="journal article" date="2010" name="Sci. Signal.">
        <title>Quantitative phosphoproteomics reveals widespread full phosphorylation site occupancy during mitosis.</title>
        <authorList>
            <person name="Olsen J.V."/>
            <person name="Vermeulen M."/>
            <person name="Santamaria A."/>
            <person name="Kumar C."/>
            <person name="Miller M.L."/>
            <person name="Jensen L.J."/>
            <person name="Gnad F."/>
            <person name="Cox J."/>
            <person name="Jensen T.S."/>
            <person name="Nigg E.A."/>
            <person name="Brunak S."/>
            <person name="Mann M."/>
        </authorList>
    </citation>
    <scope>PHOSPHORYLATION [LARGE SCALE ANALYSIS] AT SER-521</scope>
    <scope>IDENTIFICATION BY MASS SPECTROMETRY [LARGE SCALE ANALYSIS]</scope>
    <source>
        <tissue>Cervix carcinoma</tissue>
    </source>
</reference>
<reference key="12">
    <citation type="journal article" date="2011" name="BMC Syst. Biol.">
        <title>Initial characterization of the human central proteome.</title>
        <authorList>
            <person name="Burkard T.R."/>
            <person name="Planyavsky M."/>
            <person name="Kaupe I."/>
            <person name="Breitwieser F.P."/>
            <person name="Buerckstuemmer T."/>
            <person name="Bennett K.L."/>
            <person name="Superti-Furga G."/>
            <person name="Colinge J."/>
        </authorList>
    </citation>
    <scope>IDENTIFICATION BY MASS SPECTROMETRY [LARGE SCALE ANALYSIS]</scope>
</reference>
<reference key="13">
    <citation type="journal article" date="2011" name="Sci. Signal.">
        <title>System-wide temporal characterization of the proteome and phosphoproteome of human embryonic stem cell differentiation.</title>
        <authorList>
            <person name="Rigbolt K.T."/>
            <person name="Prokhorova T.A."/>
            <person name="Akimov V."/>
            <person name="Henningsen J."/>
            <person name="Johansen P.T."/>
            <person name="Kratchmarova I."/>
            <person name="Kassem M."/>
            <person name="Mann M."/>
            <person name="Olsen J.V."/>
            <person name="Blagoev B."/>
        </authorList>
    </citation>
    <scope>PHOSPHORYLATION [LARGE SCALE ANALYSIS] AT SER-521</scope>
    <scope>IDENTIFICATION BY MASS SPECTROMETRY [LARGE SCALE ANALYSIS]</scope>
</reference>
<reference key="14">
    <citation type="journal article" date="2013" name="J. Proteome Res.">
        <title>Toward a comprehensive characterization of a human cancer cell phosphoproteome.</title>
        <authorList>
            <person name="Zhou H."/>
            <person name="Di Palma S."/>
            <person name="Preisinger C."/>
            <person name="Peng M."/>
            <person name="Polat A.N."/>
            <person name="Heck A.J."/>
            <person name="Mohammed S."/>
        </authorList>
    </citation>
    <scope>PHOSPHORYLATION [LARGE SCALE ANALYSIS] AT SER-521</scope>
    <scope>IDENTIFICATION BY MASS SPECTROMETRY [LARGE SCALE ANALYSIS]</scope>
    <source>
        <tissue>Cervix carcinoma</tissue>
        <tissue>Erythroleukemia</tissue>
    </source>
</reference>
<reference key="15">
    <citation type="journal article" date="2016" name="Proc. Natl. Acad. Sci. U.S.A.">
        <title>SIRT6 deacetylates PKM2 to suppress its nuclear localization and oncogenic functions.</title>
        <authorList>
            <person name="Bhardwaj A."/>
            <person name="Das S."/>
        </authorList>
    </citation>
    <scope>FUNCTION</scope>
</reference>
<comment type="function">
    <text evidence="1 2 3 4">Mediates the nuclear export of proteins (cargos), such as EIF5A, SMAD3 and isoform M2 of PKM (PKM2) (PubMed:10944119, PubMed:16449645, PubMed:26787900). In the nucleus binds cooperatively to its cargo and to the GTPase Ran in its active GTP-bound form. Docking of this trimeric complex to the nuclear pore complex (NPC) is mediated through binding to nucleoporins (PubMed:10944119, PubMed:16449645). Upon transit of a nuclear export complex into the cytoplasm, disassembling of the complex and hydrolysis of Ran-GTP to Ran-GDP (induced by RANBP1 and RANGAP1, respectively) cause release of the cargo from the export receptor (PubMed:10944119, PubMed:16449645). XPO4 then return to the nuclear compartment and mediate another round of transport (PubMed:10944119, PubMed:16449645). The directionality of nuclear export is thought to be conferred by an asymmetric distribution of the GTP- and GDP-bound forms of Ran between the cytoplasm and nucleus (PubMed:10944119, PubMed:16449645). Catalyzes the nuclear export of hypusinated EIF5A; a small cytoplasmic protein that enters nucleus and accumulates within nucleolus if not exported back by XPO4 (PubMed:10944119). Specifically mediates nuclear export of isoform M2 of PKM (PKM2) following PKM2 deacetylation by SIRT6 (PubMed:26787900). Also mediates the nuclear import of SOX transcription factors SRY and SOX2 (By similarity).</text>
</comment>
<comment type="subunit">
    <text evidence="2 3">Interacts with Ran and cargo proteins in a GTP-dependent manner.</text>
</comment>
<comment type="subcellular location">
    <subcellularLocation>
        <location evidence="3">Cytoplasm</location>
    </subcellularLocation>
    <subcellularLocation>
        <location evidence="3">Nucleus</location>
    </subcellularLocation>
    <text evidence="3">Shuttles between the nucleus and the cytoplasm.</text>
</comment>
<comment type="similarity">
    <text evidence="8">Belongs to the exportin family.</text>
</comment>
<comment type="sequence caution" evidence="8">
    <conflict type="erroneous initiation">
        <sequence resource="EMBL-CDS" id="BAB14409"/>
    </conflict>
</comment>
<gene>
    <name evidence="7 9" type="primary">XPO4</name>
    <name evidence="6" type="synonym">KIAA1721</name>
</gene>
<name>XPO4_HUMAN</name>
<accession>Q9C0E2</accession>
<accession>Q5VUZ5</accession>
<accession>Q8N3V6</accession>
<accession>Q9H934</accession>
<feature type="chain" id="PRO_0000204711" description="Exportin-4">
    <location>
        <begin position="1"/>
        <end position="1151"/>
    </location>
</feature>
<feature type="modified residue" description="Phosphoserine" evidence="11 12">
    <location>
        <position position="464"/>
    </location>
</feature>
<feature type="modified residue" description="Phosphoserine" evidence="10 12 13 14 15 16">
    <location>
        <position position="521"/>
    </location>
</feature>
<feature type="sequence variant" id="VAR_048958" description="In dbSNP:rs17320607.">
    <original>N</original>
    <variation>S</variation>
    <location>
        <position position="149"/>
    </location>
</feature>
<feature type="sequence variant" id="VAR_048959" description="In dbSNP:rs9552285.">
    <original>T</original>
    <variation>A</variation>
    <location>
        <position position="451"/>
    </location>
</feature>
<feature type="sequence conflict" description="In Ref. 3; BAB14409." evidence="8" ref="3">
    <original>L</original>
    <variation>S</variation>
    <location>
        <position position="511"/>
    </location>
</feature>
<sequence>MMAAALGPPEVIAQLENAAKVLMAPPSMVNNEQRQHAEHIFLSFRKSKSPFAVCKHILETSKVDYVLFQAATAIMEAVVREWILLEKGSIESLRTFLLTYVLQRPNLQKYVREQILLAVAVIVKRGSLDKSIDCKSIFHEVSQLISSGNPTVQTLACSILTALLSEFSSSSKTSNIGLSMEFHGNCKRVFQEEDLRQIFMLTVEVLQEFSRRENLNAQMSSVFQRYLALANQVLSWNFLPPNLGRHYIAMFESSQNVLLKPTESWRETLLDSRVMELFFTVHRKIREDSDMAQDSLQCLAQLASLHGPIFPDEGSQVDYLAHFIEGLLNTINGIEIEDSEAVGISSIISNLITVFPRNVLTAIPSELFSSFVNCLTHLTCSFGRSAALEEVLDKDDMVYMEAYDKLLESWLTLVQDDKHFHKGFFTQHAVQVFNSYIQCHLAAPDGTRNLTANGVASREEEEISELQEDDRDQFSDQLASVGMLGRIAAEHCIPLLTSLLEERVTRLHGQLQRHQQQLLASPGSSTVDNKMLDDLYEDIHWLILVTGYLLADDTQGETPLIPPEIMEYSIKHSSEVDINTTLQILGSPGEKASSIPGYNRTDSVIRLLSAILRVSEVESRAIRADLTHLLSPQMGKDIVWFLKRWAKTYLLVDEKLYDQISLPFSTAFGADTEGSQWIIGYLLQKVISNLSVWSSEQDLANDTVQLLVTLVERRERANLVIQCENWWNLAKQFASRSPPLNFLSSPVQRTLMKALVLGGFAHMDTETKQQYWTEVLQPLQQRFLRVINQENFQQMCQQEEVKQEITATLEALCGIAEATQIDNVAILFNFLMDFLTNCIGLMEVYKNTPETVNLIIEVFVEVAHKQICYLGESKAMNLYEACLTLLQVYSKNNLGRQRIDVTAEEEQYQDLLLIMELLTNLLSKEFIDFSDTDEVFRGHEPGQAANRSVSAADVVLYGVNLILPLMSQDLLKFPTLCNQYYKLITFICEIFPEKIPQLPEDLFKSLMYSLELGMTSMSSEVCQLCLEALTPLAEQCAKAQETDSPLFLATRHFLKLVFDMLVLQKHNTEMTTAAGEAFYTLVCLHQAEYSELVETLLSSQQDPVIYQRLADAFNKLTASSTPPTLDRKQKMAFLKSLEEFMANVGGLLCVK</sequence>
<protein>
    <recommendedName>
        <fullName evidence="5">Exportin-4</fullName>
        <shortName evidence="5">Exp4</shortName>
    </recommendedName>
</protein>
<dbReference type="EMBL" id="AB051508">
    <property type="protein sequence ID" value="BAB21812.1"/>
    <property type="molecule type" value="mRNA"/>
</dbReference>
<dbReference type="EMBL" id="AL512652">
    <property type="status" value="NOT_ANNOTATED_CDS"/>
    <property type="molecule type" value="Genomic_DNA"/>
</dbReference>
<dbReference type="EMBL" id="AL356285">
    <property type="status" value="NOT_ANNOTATED_CDS"/>
    <property type="molecule type" value="Genomic_DNA"/>
</dbReference>
<dbReference type="EMBL" id="AK023108">
    <property type="protein sequence ID" value="BAB14409.1"/>
    <property type="status" value="ALT_INIT"/>
    <property type="molecule type" value="mRNA"/>
</dbReference>
<dbReference type="EMBL" id="AL831819">
    <property type="protein sequence ID" value="CAD38533.2"/>
    <property type="molecule type" value="mRNA"/>
</dbReference>
<dbReference type="CCDS" id="CCDS41872.1"/>
<dbReference type="RefSeq" id="NP_071904.4">
    <property type="nucleotide sequence ID" value="NM_022459.4"/>
</dbReference>
<dbReference type="SMR" id="Q9C0E2"/>
<dbReference type="BioGRID" id="122138">
    <property type="interactions" value="112"/>
</dbReference>
<dbReference type="CORUM" id="Q9C0E2"/>
<dbReference type="FunCoup" id="Q9C0E2">
    <property type="interactions" value="4263"/>
</dbReference>
<dbReference type="IntAct" id="Q9C0E2">
    <property type="interactions" value="74"/>
</dbReference>
<dbReference type="MINT" id="Q9C0E2"/>
<dbReference type="STRING" id="9606.ENSP00000255305"/>
<dbReference type="TCDB" id="1.I.1.1.3">
    <property type="family name" value="the nuclear pore complex (npc) family"/>
</dbReference>
<dbReference type="GlyGen" id="Q9C0E2">
    <property type="glycosylation" value="3 sites, 2 N-linked glycans (2 sites), 1 O-linked glycan (1 site)"/>
</dbReference>
<dbReference type="iPTMnet" id="Q9C0E2"/>
<dbReference type="MetOSite" id="Q9C0E2"/>
<dbReference type="PhosphoSitePlus" id="Q9C0E2"/>
<dbReference type="BioMuta" id="XPO4"/>
<dbReference type="DMDM" id="17368720"/>
<dbReference type="jPOST" id="Q9C0E2"/>
<dbReference type="MassIVE" id="Q9C0E2"/>
<dbReference type="PaxDb" id="9606-ENSP00000255305"/>
<dbReference type="PeptideAtlas" id="Q9C0E2"/>
<dbReference type="ProteomicsDB" id="80019"/>
<dbReference type="Pumba" id="Q9C0E2"/>
<dbReference type="ABCD" id="Q9C0E2">
    <property type="antibodies" value="1 sequenced antibody"/>
</dbReference>
<dbReference type="Antibodypedia" id="41969">
    <property type="antibodies" value="47 antibodies from 19 providers"/>
</dbReference>
<dbReference type="DNASU" id="64328"/>
<dbReference type="Ensembl" id="ENST00000255305.11">
    <property type="protein sequence ID" value="ENSP00000255305.6"/>
    <property type="gene ID" value="ENSG00000132953.18"/>
</dbReference>
<dbReference type="GeneID" id="64328"/>
<dbReference type="KEGG" id="hsa:64328"/>
<dbReference type="MANE-Select" id="ENST00000255305.11">
    <property type="protein sequence ID" value="ENSP00000255305.6"/>
    <property type="RefSeq nucleotide sequence ID" value="NM_022459.5"/>
    <property type="RefSeq protein sequence ID" value="NP_071904.4"/>
</dbReference>
<dbReference type="UCSC" id="uc001unq.5">
    <property type="organism name" value="human"/>
</dbReference>
<dbReference type="AGR" id="HGNC:17796"/>
<dbReference type="CTD" id="64328"/>
<dbReference type="DisGeNET" id="64328"/>
<dbReference type="GeneCards" id="XPO4"/>
<dbReference type="HGNC" id="HGNC:17796">
    <property type="gene designation" value="XPO4"/>
</dbReference>
<dbReference type="HPA" id="ENSG00000132953">
    <property type="expression patterns" value="Tissue enhanced (skeletal)"/>
</dbReference>
<dbReference type="MIM" id="611449">
    <property type="type" value="gene"/>
</dbReference>
<dbReference type="neXtProt" id="NX_Q9C0E2"/>
<dbReference type="OpenTargets" id="ENSG00000132953"/>
<dbReference type="PharmGKB" id="PA134866468"/>
<dbReference type="VEuPathDB" id="HostDB:ENSG00000132953"/>
<dbReference type="eggNOG" id="KOG4541">
    <property type="taxonomic scope" value="Eukaryota"/>
</dbReference>
<dbReference type="GeneTree" id="ENSGT00940000153139"/>
<dbReference type="HOGENOM" id="CLU_005818_0_0_1"/>
<dbReference type="InParanoid" id="Q9C0E2"/>
<dbReference type="OMA" id="SKWETNH"/>
<dbReference type="OrthoDB" id="5548448at2759"/>
<dbReference type="PAN-GO" id="Q9C0E2">
    <property type="GO annotations" value="4 GO annotations based on evolutionary models"/>
</dbReference>
<dbReference type="PhylomeDB" id="Q9C0E2"/>
<dbReference type="TreeFam" id="TF312991"/>
<dbReference type="PathwayCommons" id="Q9C0E2"/>
<dbReference type="SignaLink" id="Q9C0E2"/>
<dbReference type="BioGRID-ORCS" id="64328">
    <property type="hits" value="23 hits in 1165 CRISPR screens"/>
</dbReference>
<dbReference type="ChiTaRS" id="XPO4">
    <property type="organism name" value="human"/>
</dbReference>
<dbReference type="GeneWiki" id="XPO4"/>
<dbReference type="GenomeRNAi" id="64328"/>
<dbReference type="Pharos" id="Q9C0E2">
    <property type="development level" value="Tbio"/>
</dbReference>
<dbReference type="PRO" id="PR:Q9C0E2"/>
<dbReference type="Proteomes" id="UP000005640">
    <property type="component" value="Chromosome 13"/>
</dbReference>
<dbReference type="RNAct" id="Q9C0E2">
    <property type="molecule type" value="protein"/>
</dbReference>
<dbReference type="Bgee" id="ENSG00000132953">
    <property type="expression patterns" value="Expressed in skeletal muscle tissue of rectus abdominis and 151 other cell types or tissues"/>
</dbReference>
<dbReference type="GO" id="GO:0005737">
    <property type="term" value="C:cytoplasm"/>
    <property type="evidence" value="ECO:0000318"/>
    <property type="project" value="GO_Central"/>
</dbReference>
<dbReference type="GO" id="GO:0005829">
    <property type="term" value="C:cytosol"/>
    <property type="evidence" value="ECO:0000314"/>
    <property type="project" value="HPA"/>
</dbReference>
<dbReference type="GO" id="GO:0005643">
    <property type="term" value="C:nuclear pore"/>
    <property type="evidence" value="ECO:0000318"/>
    <property type="project" value="GO_Central"/>
</dbReference>
<dbReference type="GO" id="GO:0005654">
    <property type="term" value="C:nucleoplasm"/>
    <property type="evidence" value="ECO:0000314"/>
    <property type="project" value="HPA"/>
</dbReference>
<dbReference type="GO" id="GO:0005634">
    <property type="term" value="C:nucleus"/>
    <property type="evidence" value="ECO:0000314"/>
    <property type="project" value="UniProt"/>
</dbReference>
<dbReference type="GO" id="GO:0005049">
    <property type="term" value="F:nuclear export signal receptor activity"/>
    <property type="evidence" value="ECO:0000314"/>
    <property type="project" value="UniProtKB"/>
</dbReference>
<dbReference type="GO" id="GO:0031267">
    <property type="term" value="F:small GTPase binding"/>
    <property type="evidence" value="ECO:0000314"/>
    <property type="project" value="UniProt"/>
</dbReference>
<dbReference type="GO" id="GO:0046827">
    <property type="term" value="P:positive regulation of protein export from nucleus"/>
    <property type="evidence" value="ECO:0000315"/>
    <property type="project" value="BHF-UCL"/>
</dbReference>
<dbReference type="GO" id="GO:0006611">
    <property type="term" value="P:protein export from nucleus"/>
    <property type="evidence" value="ECO:0000314"/>
    <property type="project" value="UniProt"/>
</dbReference>
<dbReference type="FunFam" id="1.25.10.10:FF:000077">
    <property type="entry name" value="Exportin 4"/>
    <property type="match status" value="1"/>
</dbReference>
<dbReference type="FunFam" id="1.25.10.10:FF:000130">
    <property type="entry name" value="Exportin 4"/>
    <property type="match status" value="1"/>
</dbReference>
<dbReference type="Gene3D" id="1.25.10.10">
    <property type="entry name" value="Leucine-rich Repeat Variant"/>
    <property type="match status" value="2"/>
</dbReference>
<dbReference type="InterPro" id="IPR011989">
    <property type="entry name" value="ARM-like"/>
</dbReference>
<dbReference type="InterPro" id="IPR016024">
    <property type="entry name" value="ARM-type_fold"/>
</dbReference>
<dbReference type="InterPro" id="IPR014877">
    <property type="entry name" value="XPO1_C_dom"/>
</dbReference>
<dbReference type="InterPro" id="IPR044189">
    <property type="entry name" value="XPO4/7-like"/>
</dbReference>
<dbReference type="PANTHER" id="PTHR12596">
    <property type="entry name" value="EXPORTIN 4,7-RELATED"/>
    <property type="match status" value="1"/>
</dbReference>
<dbReference type="PANTHER" id="PTHR12596:SF1">
    <property type="entry name" value="EXPORTIN-4"/>
    <property type="match status" value="1"/>
</dbReference>
<dbReference type="Pfam" id="PF08767">
    <property type="entry name" value="CRM1_C"/>
    <property type="match status" value="1"/>
</dbReference>
<dbReference type="SUPFAM" id="SSF48371">
    <property type="entry name" value="ARM repeat"/>
    <property type="match status" value="1"/>
</dbReference>
<proteinExistence type="evidence at protein level"/>